<gene>
    <name evidence="1" type="primary">uvrC</name>
    <name type="ordered locus">ECDH10B_2054</name>
</gene>
<reference key="1">
    <citation type="journal article" date="2008" name="J. Bacteriol.">
        <title>The complete genome sequence of Escherichia coli DH10B: insights into the biology of a laboratory workhorse.</title>
        <authorList>
            <person name="Durfee T."/>
            <person name="Nelson R."/>
            <person name="Baldwin S."/>
            <person name="Plunkett G. III"/>
            <person name="Burland V."/>
            <person name="Mau B."/>
            <person name="Petrosino J.F."/>
            <person name="Qin X."/>
            <person name="Muzny D.M."/>
            <person name="Ayele M."/>
            <person name="Gibbs R.A."/>
            <person name="Csorgo B."/>
            <person name="Posfai G."/>
            <person name="Weinstock G.M."/>
            <person name="Blattner F.R."/>
        </authorList>
    </citation>
    <scope>NUCLEOTIDE SEQUENCE [LARGE SCALE GENOMIC DNA]</scope>
    <source>
        <strain>K12 / DH10B</strain>
    </source>
</reference>
<organism>
    <name type="scientific">Escherichia coli (strain K12 / DH10B)</name>
    <dbReference type="NCBI Taxonomy" id="316385"/>
    <lineage>
        <taxon>Bacteria</taxon>
        <taxon>Pseudomonadati</taxon>
        <taxon>Pseudomonadota</taxon>
        <taxon>Gammaproteobacteria</taxon>
        <taxon>Enterobacterales</taxon>
        <taxon>Enterobacteriaceae</taxon>
        <taxon>Escherichia</taxon>
    </lineage>
</organism>
<name>UVRC_ECODH</name>
<keyword id="KW-0963">Cytoplasm</keyword>
<keyword id="KW-0227">DNA damage</keyword>
<keyword id="KW-0228">DNA excision</keyword>
<keyword id="KW-0234">DNA repair</keyword>
<keyword id="KW-0267">Excision nuclease</keyword>
<keyword id="KW-0742">SOS response</keyword>
<comment type="function">
    <text evidence="1">The UvrABC repair system catalyzes the recognition and processing of DNA lesions. UvrC both incises the 5' and 3' sides of the lesion. The N-terminal half is responsible for the 3' incision and the C-terminal half is responsible for the 5' incision.</text>
</comment>
<comment type="subunit">
    <text evidence="1">Interacts with UvrB in an incision complex.</text>
</comment>
<comment type="subcellular location">
    <subcellularLocation>
        <location evidence="1">Cytoplasm</location>
    </subcellularLocation>
</comment>
<comment type="similarity">
    <text evidence="1">Belongs to the UvrC family.</text>
</comment>
<feature type="chain" id="PRO_1000099478" description="UvrABC system protein C">
    <location>
        <begin position="1"/>
        <end position="610"/>
    </location>
</feature>
<feature type="domain" description="GIY-YIG" evidence="1">
    <location>
        <begin position="16"/>
        <end position="94"/>
    </location>
</feature>
<feature type="domain" description="UVR" evidence="1">
    <location>
        <begin position="204"/>
        <end position="239"/>
    </location>
</feature>
<protein>
    <recommendedName>
        <fullName evidence="1">UvrABC system protein C</fullName>
        <shortName evidence="1">Protein UvrC</shortName>
    </recommendedName>
    <alternativeName>
        <fullName evidence="1">Excinuclease ABC subunit C</fullName>
    </alternativeName>
</protein>
<evidence type="ECO:0000255" key="1">
    <source>
        <dbReference type="HAMAP-Rule" id="MF_00203"/>
    </source>
</evidence>
<sequence length="610" mass="68188">MSDQFDAKAFLKTVTSQPGVYRMYDAGGTVIYVGKAKDLKKRLSSYFRSNLASRKTEALVAQIQQIDVTVTHTETEALLLEHNYIKLYQPRYNVLLRDDKSYPFIFLSGDTHPRLAMHRGAKHAKGEYFGPFPNGYAVRETLALLQKIFPIRQCENSVYRNRSRPCLQYQIGRCLGPCVEGLVSEEEYAQQVEYVRLFLSGKDDQVLTQLISRMETASQNLEFEEAARIRDQIQAVRRVTEKQFVSNTGDDLDVIGVAFDAGMACVHVLFIRQGKVLGSRSYFPKVPGGTELSEVVETFVGQFYLQGSQMRTLPGEILLDFNLSDKTLLADSLSELAGRKINVQTKPRGDRARYLKLARTNAATALTSKLSQQSTVHQRLTALASVLKLPEVKRMECFDISHTMGEQTVASCVVFDANGPLRAEYRRYNITGITPGDDYAAMNQVLRRRYGKAIDDSKIPDVILIDGGKGQLAQAKNVFAELDVSWDKNHPLLLGVAKGADRKAGLETLFFEPEGEGFSLPPDSPALHVIQHIRDESHDHAIGGHRKKRAKVKNTSSLETIEGVGPKRRQMLLKYMGGLQGLRNASVEEIAKVPGISQGLAEKIFWSLKH</sequence>
<proteinExistence type="inferred from homology"/>
<dbReference type="EMBL" id="CP000948">
    <property type="protein sequence ID" value="ACB03103.1"/>
    <property type="molecule type" value="Genomic_DNA"/>
</dbReference>
<dbReference type="RefSeq" id="WP_001283421.1">
    <property type="nucleotide sequence ID" value="NC_010473.1"/>
</dbReference>
<dbReference type="SMR" id="B1X671"/>
<dbReference type="GeneID" id="93776218"/>
<dbReference type="KEGG" id="ecd:ECDH10B_2054"/>
<dbReference type="HOGENOM" id="CLU_014841_3_0_6"/>
<dbReference type="GO" id="GO:0005737">
    <property type="term" value="C:cytoplasm"/>
    <property type="evidence" value="ECO:0007669"/>
    <property type="project" value="UniProtKB-SubCell"/>
</dbReference>
<dbReference type="GO" id="GO:0009380">
    <property type="term" value="C:excinuclease repair complex"/>
    <property type="evidence" value="ECO:0007669"/>
    <property type="project" value="InterPro"/>
</dbReference>
<dbReference type="GO" id="GO:0003677">
    <property type="term" value="F:DNA binding"/>
    <property type="evidence" value="ECO:0007669"/>
    <property type="project" value="UniProtKB-UniRule"/>
</dbReference>
<dbReference type="GO" id="GO:0009381">
    <property type="term" value="F:excinuclease ABC activity"/>
    <property type="evidence" value="ECO:0007669"/>
    <property type="project" value="UniProtKB-UniRule"/>
</dbReference>
<dbReference type="GO" id="GO:0006289">
    <property type="term" value="P:nucleotide-excision repair"/>
    <property type="evidence" value="ECO:0007669"/>
    <property type="project" value="UniProtKB-UniRule"/>
</dbReference>
<dbReference type="GO" id="GO:0009432">
    <property type="term" value="P:SOS response"/>
    <property type="evidence" value="ECO:0007669"/>
    <property type="project" value="UniProtKB-UniRule"/>
</dbReference>
<dbReference type="CDD" id="cd10434">
    <property type="entry name" value="GIY-YIG_UvrC_Cho"/>
    <property type="match status" value="1"/>
</dbReference>
<dbReference type="FunFam" id="1.10.150.20:FF:000005">
    <property type="entry name" value="UvrABC system protein C"/>
    <property type="match status" value="1"/>
</dbReference>
<dbReference type="FunFam" id="3.30.420.340:FF:000001">
    <property type="entry name" value="UvrABC system protein C"/>
    <property type="match status" value="1"/>
</dbReference>
<dbReference type="FunFam" id="3.40.1440.10:FF:000001">
    <property type="entry name" value="UvrABC system protein C"/>
    <property type="match status" value="1"/>
</dbReference>
<dbReference type="FunFam" id="4.10.860.10:FF:000002">
    <property type="entry name" value="UvrABC system protein C"/>
    <property type="match status" value="1"/>
</dbReference>
<dbReference type="Gene3D" id="1.10.150.20">
    <property type="entry name" value="5' to 3' exonuclease, C-terminal subdomain"/>
    <property type="match status" value="1"/>
</dbReference>
<dbReference type="Gene3D" id="3.40.1440.10">
    <property type="entry name" value="GIY-YIG endonuclease"/>
    <property type="match status" value="1"/>
</dbReference>
<dbReference type="Gene3D" id="4.10.860.10">
    <property type="entry name" value="UVR domain"/>
    <property type="match status" value="1"/>
</dbReference>
<dbReference type="Gene3D" id="3.30.420.340">
    <property type="entry name" value="UvrC, RNAse H endonuclease domain"/>
    <property type="match status" value="1"/>
</dbReference>
<dbReference type="HAMAP" id="MF_00203">
    <property type="entry name" value="UvrC"/>
    <property type="match status" value="1"/>
</dbReference>
<dbReference type="InterPro" id="IPR000305">
    <property type="entry name" value="GIY-YIG_endonuc"/>
</dbReference>
<dbReference type="InterPro" id="IPR035901">
    <property type="entry name" value="GIY-YIG_endonuc_sf"/>
</dbReference>
<dbReference type="InterPro" id="IPR047296">
    <property type="entry name" value="GIY-YIG_UvrC_Cho"/>
</dbReference>
<dbReference type="InterPro" id="IPR003583">
    <property type="entry name" value="Hlx-hairpin-Hlx_DNA-bd_motif"/>
</dbReference>
<dbReference type="InterPro" id="IPR010994">
    <property type="entry name" value="RuvA_2-like"/>
</dbReference>
<dbReference type="InterPro" id="IPR001943">
    <property type="entry name" value="UVR_dom"/>
</dbReference>
<dbReference type="InterPro" id="IPR036876">
    <property type="entry name" value="UVR_dom_sf"/>
</dbReference>
<dbReference type="InterPro" id="IPR050066">
    <property type="entry name" value="UvrABC_protein_C"/>
</dbReference>
<dbReference type="InterPro" id="IPR004791">
    <property type="entry name" value="UvrC"/>
</dbReference>
<dbReference type="InterPro" id="IPR001162">
    <property type="entry name" value="UvrC_RNase_H_dom"/>
</dbReference>
<dbReference type="InterPro" id="IPR038476">
    <property type="entry name" value="UvrC_RNase_H_dom_sf"/>
</dbReference>
<dbReference type="NCBIfam" id="NF001824">
    <property type="entry name" value="PRK00558.1-5"/>
    <property type="match status" value="1"/>
</dbReference>
<dbReference type="NCBIfam" id="TIGR00194">
    <property type="entry name" value="uvrC"/>
    <property type="match status" value="1"/>
</dbReference>
<dbReference type="PANTHER" id="PTHR30562:SF1">
    <property type="entry name" value="UVRABC SYSTEM PROTEIN C"/>
    <property type="match status" value="1"/>
</dbReference>
<dbReference type="PANTHER" id="PTHR30562">
    <property type="entry name" value="UVRC/OXIDOREDUCTASE"/>
    <property type="match status" value="1"/>
</dbReference>
<dbReference type="Pfam" id="PF01541">
    <property type="entry name" value="GIY-YIG"/>
    <property type="match status" value="1"/>
</dbReference>
<dbReference type="Pfam" id="PF14520">
    <property type="entry name" value="HHH_5"/>
    <property type="match status" value="1"/>
</dbReference>
<dbReference type="Pfam" id="PF02151">
    <property type="entry name" value="UVR"/>
    <property type="match status" value="1"/>
</dbReference>
<dbReference type="Pfam" id="PF22920">
    <property type="entry name" value="UvrC_RNaseH"/>
    <property type="match status" value="1"/>
</dbReference>
<dbReference type="Pfam" id="PF08459">
    <property type="entry name" value="UvrC_RNaseH_dom"/>
    <property type="match status" value="1"/>
</dbReference>
<dbReference type="SMART" id="SM00465">
    <property type="entry name" value="GIYc"/>
    <property type="match status" value="1"/>
</dbReference>
<dbReference type="SMART" id="SM00278">
    <property type="entry name" value="HhH1"/>
    <property type="match status" value="2"/>
</dbReference>
<dbReference type="SUPFAM" id="SSF46600">
    <property type="entry name" value="C-terminal UvrC-binding domain of UvrB"/>
    <property type="match status" value="1"/>
</dbReference>
<dbReference type="SUPFAM" id="SSF82771">
    <property type="entry name" value="GIY-YIG endonuclease"/>
    <property type="match status" value="1"/>
</dbReference>
<dbReference type="SUPFAM" id="SSF47781">
    <property type="entry name" value="RuvA domain 2-like"/>
    <property type="match status" value="1"/>
</dbReference>
<dbReference type="PROSITE" id="PS50164">
    <property type="entry name" value="GIY_YIG"/>
    <property type="match status" value="1"/>
</dbReference>
<dbReference type="PROSITE" id="PS50151">
    <property type="entry name" value="UVR"/>
    <property type="match status" value="1"/>
</dbReference>
<dbReference type="PROSITE" id="PS50165">
    <property type="entry name" value="UVRC"/>
    <property type="match status" value="1"/>
</dbReference>
<accession>B1X671</accession>